<protein>
    <recommendedName>
        <fullName evidence="1">Ribosome biogenesis protein Nop10</fullName>
    </recommendedName>
</protein>
<keyword id="KW-0687">Ribonucleoprotein</keyword>
<keyword id="KW-0690">Ribosome biogenesis</keyword>
<keyword id="KW-0698">rRNA processing</keyword>
<proteinExistence type="inferred from homology"/>
<gene>
    <name evidence="1" type="primary">nop10</name>
    <name type="ordered locus">M164_1157</name>
</gene>
<comment type="function">
    <text evidence="1">Involved in ribosome biogenesis; more specifically in 18S rRNA pseudouridylation and in cleavage of pre-rRNA.</text>
</comment>
<comment type="similarity">
    <text evidence="1">Belongs to the NOP10 family.</text>
</comment>
<sequence length="56" mass="6641">MKWKMKKCPKDNTYTFKDICPVCGSKTMIPHPSRFSPEDKYVKYRIELKKGVKLNC</sequence>
<feature type="chain" id="PRO_1000212992" description="Ribosome biogenesis protein Nop10">
    <location>
        <begin position="1"/>
        <end position="56"/>
    </location>
</feature>
<evidence type="ECO:0000255" key="1">
    <source>
        <dbReference type="HAMAP-Rule" id="MF_00803"/>
    </source>
</evidence>
<reference key="1">
    <citation type="journal article" date="2009" name="Proc. Natl. Acad. Sci. U.S.A.">
        <title>Biogeography of the Sulfolobus islandicus pan-genome.</title>
        <authorList>
            <person name="Reno M.L."/>
            <person name="Held N.L."/>
            <person name="Fields C.J."/>
            <person name="Burke P.V."/>
            <person name="Whitaker R.J."/>
        </authorList>
    </citation>
    <scope>NUCLEOTIDE SEQUENCE [LARGE SCALE GENOMIC DNA]</scope>
    <source>
        <strain>M.16.4 / Kamchatka #3</strain>
    </source>
</reference>
<organism>
    <name type="scientific">Saccharolobus islandicus (strain M.16.4 / Kamchatka #3)</name>
    <name type="common">Sulfolobus islandicus</name>
    <dbReference type="NCBI Taxonomy" id="426118"/>
    <lineage>
        <taxon>Archaea</taxon>
        <taxon>Thermoproteota</taxon>
        <taxon>Thermoprotei</taxon>
        <taxon>Sulfolobales</taxon>
        <taxon>Sulfolobaceae</taxon>
        <taxon>Saccharolobus</taxon>
    </lineage>
</organism>
<name>NOP10_SACI6</name>
<accession>C4KGP7</accession>
<dbReference type="EMBL" id="CP001402">
    <property type="protein sequence ID" value="ACR41761.1"/>
    <property type="molecule type" value="Genomic_DNA"/>
</dbReference>
<dbReference type="RefSeq" id="WP_012711191.1">
    <property type="nucleotide sequence ID" value="NC_012726.1"/>
</dbReference>
<dbReference type="SMR" id="C4KGP7"/>
<dbReference type="GeneID" id="87023369"/>
<dbReference type="KEGG" id="sid:M164_1157"/>
<dbReference type="HOGENOM" id="CLU_196480_1_0_2"/>
<dbReference type="Proteomes" id="UP000001479">
    <property type="component" value="Chromosome"/>
</dbReference>
<dbReference type="GO" id="GO:1990904">
    <property type="term" value="C:ribonucleoprotein complex"/>
    <property type="evidence" value="ECO:0007669"/>
    <property type="project" value="UniProtKB-KW"/>
</dbReference>
<dbReference type="GO" id="GO:0030515">
    <property type="term" value="F:snoRNA binding"/>
    <property type="evidence" value="ECO:0007669"/>
    <property type="project" value="InterPro"/>
</dbReference>
<dbReference type="GO" id="GO:0001522">
    <property type="term" value="P:pseudouridine synthesis"/>
    <property type="evidence" value="ECO:0007669"/>
    <property type="project" value="InterPro"/>
</dbReference>
<dbReference type="GO" id="GO:0006364">
    <property type="term" value="P:rRNA processing"/>
    <property type="evidence" value="ECO:0007669"/>
    <property type="project" value="UniProtKB-UniRule"/>
</dbReference>
<dbReference type="Gene3D" id="2.20.28.40">
    <property type="entry name" value="H/ACA ribonucleoprotein complex, subunit Nop10"/>
    <property type="match status" value="1"/>
</dbReference>
<dbReference type="HAMAP" id="MF_00803">
    <property type="entry name" value="Nop10"/>
    <property type="match status" value="1"/>
</dbReference>
<dbReference type="InterPro" id="IPR007264">
    <property type="entry name" value="H/ACA_rnp_Nop10"/>
</dbReference>
<dbReference type="InterPro" id="IPR036756">
    <property type="entry name" value="H/ACA_rnp_Nop10_sf"/>
</dbReference>
<dbReference type="InterPro" id="IPR023532">
    <property type="entry name" value="Nop10_arc-typ"/>
</dbReference>
<dbReference type="NCBIfam" id="NF009623">
    <property type="entry name" value="PRK13130.1"/>
    <property type="match status" value="1"/>
</dbReference>
<dbReference type="PANTHER" id="PTHR13305:SF0">
    <property type="entry name" value="H_ACA RIBONUCLEOPROTEIN COMPLEX SUBUNIT 3"/>
    <property type="match status" value="1"/>
</dbReference>
<dbReference type="PANTHER" id="PTHR13305">
    <property type="entry name" value="RIBOSOME BIOGENESIS PROTEIN NOP10"/>
    <property type="match status" value="1"/>
</dbReference>
<dbReference type="Pfam" id="PF04135">
    <property type="entry name" value="Nop10p"/>
    <property type="match status" value="1"/>
</dbReference>
<dbReference type="SUPFAM" id="SSF144210">
    <property type="entry name" value="Nop10-like SnoRNP"/>
    <property type="match status" value="1"/>
</dbReference>